<feature type="chain" id="PRO_1000079351" description="Large ribosomal subunit protein bL32">
    <location>
        <begin position="1"/>
        <end position="57"/>
    </location>
</feature>
<keyword id="KW-0687">Ribonucleoprotein</keyword>
<keyword id="KW-0689">Ribosomal protein</keyword>
<accession>B1AIX2</accession>
<sequence>MAVQQRRVSKSRKGMRRSHDHLTISNTVACNECGKALLPHRACRDCKTYRSIKLSIK</sequence>
<reference key="1">
    <citation type="submission" date="2008-02" db="EMBL/GenBank/DDBJ databases">
        <title>Genome sequence of Ureaplasma parvum serovar 3.</title>
        <authorList>
            <person name="Methe B.A."/>
            <person name="Glass J."/>
            <person name="Waites K."/>
            <person name="Shrivastava S."/>
        </authorList>
    </citation>
    <scope>NUCLEOTIDE SEQUENCE [LARGE SCALE GENOMIC DNA]</scope>
    <source>
        <strain>ATCC 27815 / 27 / NCTC 11736</strain>
    </source>
</reference>
<name>RL32_UREP2</name>
<protein>
    <recommendedName>
        <fullName evidence="1">Large ribosomal subunit protein bL32</fullName>
    </recommendedName>
    <alternativeName>
        <fullName evidence="2">50S ribosomal protein L32</fullName>
    </alternativeName>
</protein>
<evidence type="ECO:0000255" key="1">
    <source>
        <dbReference type="HAMAP-Rule" id="MF_00340"/>
    </source>
</evidence>
<evidence type="ECO:0000305" key="2"/>
<organism>
    <name type="scientific">Ureaplasma parvum serovar 3 (strain ATCC 27815 / 27 / NCTC 11736)</name>
    <dbReference type="NCBI Taxonomy" id="505682"/>
    <lineage>
        <taxon>Bacteria</taxon>
        <taxon>Bacillati</taxon>
        <taxon>Mycoplasmatota</taxon>
        <taxon>Mycoplasmoidales</taxon>
        <taxon>Mycoplasmoidaceae</taxon>
        <taxon>Ureaplasma</taxon>
    </lineage>
</organism>
<comment type="similarity">
    <text evidence="1">Belongs to the bacterial ribosomal protein bL32 family.</text>
</comment>
<gene>
    <name evidence="1" type="primary">rpmF</name>
    <name type="ordered locus">UPA3_0349</name>
</gene>
<dbReference type="EMBL" id="CP000942">
    <property type="protein sequence ID" value="ACA32714.1"/>
    <property type="molecule type" value="Genomic_DNA"/>
</dbReference>
<dbReference type="RefSeq" id="WP_006688693.1">
    <property type="nucleotide sequence ID" value="NC_010503.1"/>
</dbReference>
<dbReference type="SMR" id="B1AIX2"/>
<dbReference type="GeneID" id="29672474"/>
<dbReference type="KEGG" id="upa:UPA3_0349"/>
<dbReference type="HOGENOM" id="CLU_129084_1_3_14"/>
<dbReference type="Proteomes" id="UP000002162">
    <property type="component" value="Chromosome"/>
</dbReference>
<dbReference type="GO" id="GO:0015934">
    <property type="term" value="C:large ribosomal subunit"/>
    <property type="evidence" value="ECO:0007669"/>
    <property type="project" value="InterPro"/>
</dbReference>
<dbReference type="GO" id="GO:0003735">
    <property type="term" value="F:structural constituent of ribosome"/>
    <property type="evidence" value="ECO:0007669"/>
    <property type="project" value="InterPro"/>
</dbReference>
<dbReference type="GO" id="GO:0006412">
    <property type="term" value="P:translation"/>
    <property type="evidence" value="ECO:0007669"/>
    <property type="project" value="UniProtKB-UniRule"/>
</dbReference>
<dbReference type="HAMAP" id="MF_00340">
    <property type="entry name" value="Ribosomal_bL32"/>
    <property type="match status" value="1"/>
</dbReference>
<dbReference type="InterPro" id="IPR002677">
    <property type="entry name" value="Ribosomal_bL32"/>
</dbReference>
<dbReference type="InterPro" id="IPR044957">
    <property type="entry name" value="Ribosomal_bL32_bact"/>
</dbReference>
<dbReference type="InterPro" id="IPR011332">
    <property type="entry name" value="Ribosomal_zn-bd"/>
</dbReference>
<dbReference type="NCBIfam" id="TIGR01031">
    <property type="entry name" value="rpmF_bact"/>
    <property type="match status" value="1"/>
</dbReference>
<dbReference type="PANTHER" id="PTHR35534">
    <property type="entry name" value="50S RIBOSOMAL PROTEIN L32"/>
    <property type="match status" value="1"/>
</dbReference>
<dbReference type="PANTHER" id="PTHR35534:SF1">
    <property type="entry name" value="LARGE RIBOSOMAL SUBUNIT PROTEIN BL32"/>
    <property type="match status" value="1"/>
</dbReference>
<dbReference type="Pfam" id="PF01783">
    <property type="entry name" value="Ribosomal_L32p"/>
    <property type="match status" value="1"/>
</dbReference>
<dbReference type="SUPFAM" id="SSF57829">
    <property type="entry name" value="Zn-binding ribosomal proteins"/>
    <property type="match status" value="1"/>
</dbReference>
<proteinExistence type="inferred from homology"/>